<proteinExistence type="inferred from homology"/>
<reference key="1">
    <citation type="journal article" date="2003" name="Nature">
        <title>Genome sequence of Bacillus cereus and comparative analysis with Bacillus anthracis.</title>
        <authorList>
            <person name="Ivanova N."/>
            <person name="Sorokin A."/>
            <person name="Anderson I."/>
            <person name="Galleron N."/>
            <person name="Candelon B."/>
            <person name="Kapatral V."/>
            <person name="Bhattacharyya A."/>
            <person name="Reznik G."/>
            <person name="Mikhailova N."/>
            <person name="Lapidus A."/>
            <person name="Chu L."/>
            <person name="Mazur M."/>
            <person name="Goltsman E."/>
            <person name="Larsen N."/>
            <person name="D'Souza M."/>
            <person name="Walunas T."/>
            <person name="Grechkin Y."/>
            <person name="Pusch G."/>
            <person name="Haselkorn R."/>
            <person name="Fonstein M."/>
            <person name="Ehrlich S.D."/>
            <person name="Overbeek R."/>
            <person name="Kyrpides N.C."/>
        </authorList>
    </citation>
    <scope>NUCLEOTIDE SEQUENCE [LARGE SCALE GENOMIC DNA]</scope>
    <source>
        <strain>ATCC 14579 / DSM 31 / CCUG 7414 / JCM 2152 / NBRC 15305 / NCIMB 9373 / NCTC 2599 / NRRL B-3711</strain>
    </source>
</reference>
<dbReference type="EC" id="6.1.1.4" evidence="1"/>
<dbReference type="EMBL" id="AE016877">
    <property type="protein sequence ID" value="AAP11642.1"/>
    <property type="molecule type" value="Genomic_DNA"/>
</dbReference>
<dbReference type="RefSeq" id="NP_834441.1">
    <property type="nucleotide sequence ID" value="NC_004722.1"/>
</dbReference>
<dbReference type="RefSeq" id="WP_000009461.1">
    <property type="nucleotide sequence ID" value="NZ_CP138336.1"/>
</dbReference>
<dbReference type="SMR" id="Q816T0"/>
<dbReference type="STRING" id="226900.BC_4737"/>
<dbReference type="KEGG" id="bce:BC4737"/>
<dbReference type="PATRIC" id="fig|226900.8.peg.4899"/>
<dbReference type="HOGENOM" id="CLU_004427_0_0_9"/>
<dbReference type="OrthoDB" id="9810365at2"/>
<dbReference type="Proteomes" id="UP000001417">
    <property type="component" value="Chromosome"/>
</dbReference>
<dbReference type="GO" id="GO:0005829">
    <property type="term" value="C:cytosol"/>
    <property type="evidence" value="ECO:0000318"/>
    <property type="project" value="GO_Central"/>
</dbReference>
<dbReference type="GO" id="GO:0002161">
    <property type="term" value="F:aminoacyl-tRNA deacylase activity"/>
    <property type="evidence" value="ECO:0007669"/>
    <property type="project" value="InterPro"/>
</dbReference>
<dbReference type="GO" id="GO:0005524">
    <property type="term" value="F:ATP binding"/>
    <property type="evidence" value="ECO:0007669"/>
    <property type="project" value="UniProtKB-UniRule"/>
</dbReference>
<dbReference type="GO" id="GO:0004823">
    <property type="term" value="F:leucine-tRNA ligase activity"/>
    <property type="evidence" value="ECO:0000318"/>
    <property type="project" value="GO_Central"/>
</dbReference>
<dbReference type="GO" id="GO:0006429">
    <property type="term" value="P:leucyl-tRNA aminoacylation"/>
    <property type="evidence" value="ECO:0000318"/>
    <property type="project" value="GO_Central"/>
</dbReference>
<dbReference type="CDD" id="cd07958">
    <property type="entry name" value="Anticodon_Ia_Leu_BEm"/>
    <property type="match status" value="1"/>
</dbReference>
<dbReference type="CDD" id="cd00812">
    <property type="entry name" value="LeuRS_core"/>
    <property type="match status" value="1"/>
</dbReference>
<dbReference type="FunFam" id="1.10.730.10:FF:000012">
    <property type="entry name" value="Leucine--tRNA ligase"/>
    <property type="match status" value="1"/>
</dbReference>
<dbReference type="FunFam" id="1.10.730.10:FF:000018">
    <property type="entry name" value="Leucine--tRNA ligase"/>
    <property type="match status" value="1"/>
</dbReference>
<dbReference type="FunFam" id="3.10.20.590:FF:000001">
    <property type="entry name" value="Leucine--tRNA ligase"/>
    <property type="match status" value="1"/>
</dbReference>
<dbReference type="FunFam" id="3.40.50.620:FF:000056">
    <property type="entry name" value="Leucine--tRNA ligase"/>
    <property type="match status" value="1"/>
</dbReference>
<dbReference type="FunFam" id="3.40.50.620:FF:000077">
    <property type="entry name" value="Leucine--tRNA ligase"/>
    <property type="match status" value="1"/>
</dbReference>
<dbReference type="Gene3D" id="3.10.20.590">
    <property type="match status" value="1"/>
</dbReference>
<dbReference type="Gene3D" id="3.40.50.620">
    <property type="entry name" value="HUPs"/>
    <property type="match status" value="2"/>
</dbReference>
<dbReference type="Gene3D" id="1.10.730.10">
    <property type="entry name" value="Isoleucyl-tRNA Synthetase, Domain 1"/>
    <property type="match status" value="1"/>
</dbReference>
<dbReference type="HAMAP" id="MF_00049_B">
    <property type="entry name" value="Leu_tRNA_synth_B"/>
    <property type="match status" value="1"/>
</dbReference>
<dbReference type="InterPro" id="IPR001412">
    <property type="entry name" value="aa-tRNA-synth_I_CS"/>
</dbReference>
<dbReference type="InterPro" id="IPR002300">
    <property type="entry name" value="aa-tRNA-synth_Ia"/>
</dbReference>
<dbReference type="InterPro" id="IPR002302">
    <property type="entry name" value="Leu-tRNA-ligase"/>
</dbReference>
<dbReference type="InterPro" id="IPR025709">
    <property type="entry name" value="Leu_tRNA-synth_edit"/>
</dbReference>
<dbReference type="InterPro" id="IPR013155">
    <property type="entry name" value="M/V/L/I-tRNA-synth_anticd-bd"/>
</dbReference>
<dbReference type="InterPro" id="IPR015413">
    <property type="entry name" value="Methionyl/Leucyl_tRNA_Synth"/>
</dbReference>
<dbReference type="InterPro" id="IPR014729">
    <property type="entry name" value="Rossmann-like_a/b/a_fold"/>
</dbReference>
<dbReference type="InterPro" id="IPR009080">
    <property type="entry name" value="tRNAsynth_Ia_anticodon-bd"/>
</dbReference>
<dbReference type="InterPro" id="IPR009008">
    <property type="entry name" value="Val/Leu/Ile-tRNA-synth_edit"/>
</dbReference>
<dbReference type="NCBIfam" id="TIGR00396">
    <property type="entry name" value="leuS_bact"/>
    <property type="match status" value="1"/>
</dbReference>
<dbReference type="PANTHER" id="PTHR43740:SF2">
    <property type="entry name" value="LEUCINE--TRNA LIGASE, MITOCHONDRIAL"/>
    <property type="match status" value="1"/>
</dbReference>
<dbReference type="PANTHER" id="PTHR43740">
    <property type="entry name" value="LEUCYL-TRNA SYNTHETASE"/>
    <property type="match status" value="1"/>
</dbReference>
<dbReference type="Pfam" id="PF08264">
    <property type="entry name" value="Anticodon_1"/>
    <property type="match status" value="1"/>
</dbReference>
<dbReference type="Pfam" id="PF00133">
    <property type="entry name" value="tRNA-synt_1"/>
    <property type="match status" value="1"/>
</dbReference>
<dbReference type="Pfam" id="PF13603">
    <property type="entry name" value="tRNA-synt_1_2"/>
    <property type="match status" value="1"/>
</dbReference>
<dbReference type="Pfam" id="PF09334">
    <property type="entry name" value="tRNA-synt_1g"/>
    <property type="match status" value="1"/>
</dbReference>
<dbReference type="PRINTS" id="PR00985">
    <property type="entry name" value="TRNASYNTHLEU"/>
</dbReference>
<dbReference type="SUPFAM" id="SSF47323">
    <property type="entry name" value="Anticodon-binding domain of a subclass of class I aminoacyl-tRNA synthetases"/>
    <property type="match status" value="1"/>
</dbReference>
<dbReference type="SUPFAM" id="SSF52374">
    <property type="entry name" value="Nucleotidylyl transferase"/>
    <property type="match status" value="1"/>
</dbReference>
<dbReference type="SUPFAM" id="SSF50677">
    <property type="entry name" value="ValRS/IleRS/LeuRS editing domain"/>
    <property type="match status" value="1"/>
</dbReference>
<dbReference type="PROSITE" id="PS00178">
    <property type="entry name" value="AA_TRNA_LIGASE_I"/>
    <property type="match status" value="1"/>
</dbReference>
<sequence length="802" mass="91353">MSFNHQEIEKKWQGYWEENKTFRTPDETEKPKFYALDMFPYPSGAGLHVGHPEGYTATDILSRMKRMQGYNVLHPMGWDAFGLPAEQYALDTGNSPAEFTEHNINTFRNQIKSLGFSYDWDREVNTTDPNYYKWTQWIFLKLFEKGLAYVDEVPVNWCPALGTVLANEEIIDGKSERGGHPVERRPMRQWMLKITAYGDRLLEDLDELDWPESLKDMQRNWIGRSEGAEVHFNIDGTDEKFTVFTTRPDTLFGATYCVLAPEHALVAEITTAEQKEAVEAYINAVKMKSDLERTELAKEKTGVFTGAYAVNPVNGEKLPIWIADYVLATYGTGAVMAVPAHDERDYEFASVFNLPMKEVVKGGDITKEVYTGDGAHVNSAFLDGLNKEEAIAKMIEWLEATSAGNQKVTYRLRDWLFSRQRYWGEPIPVIHWEDGTMTAVKEEELPLVLPKTENIRPSGTGESPLANIDEWVNVVDPETGKKGRRETNTMPQWAGSCWYYLRYIDPNNSEALVDPEKVKQWLPVDIYIGGAEHAVLHLLYARFWHKVLYDIGVVPTKEPFQQLFNQGMILGENNEKMSKSKGNVVNPDDIVASHGADTLRLYEMFMGPLDASIAWSENGLDGARRFLDRVWRLFVQDNGELSEKITDAPNKELEKAYHQTVKKVTEDYAELRFNTAISQMMVFINDAYKAETLPREYVEGFVKMIAPVAPHIGEELWSKLGYNETITYASWPTFDESKLVEDEVEIVVQVMGKVRAKLTMSKDASKEEMEQLALEAIQDQIEGKTVRKVIVVPGKLVNVVAN</sequence>
<accession>Q816T0</accession>
<evidence type="ECO:0000255" key="1">
    <source>
        <dbReference type="HAMAP-Rule" id="MF_00049"/>
    </source>
</evidence>
<name>SYL_BACCR</name>
<protein>
    <recommendedName>
        <fullName evidence="1">Leucine--tRNA ligase</fullName>
        <ecNumber evidence="1">6.1.1.4</ecNumber>
    </recommendedName>
    <alternativeName>
        <fullName evidence="1">Leucyl-tRNA synthetase</fullName>
        <shortName evidence="1">LeuRS</shortName>
    </alternativeName>
</protein>
<comment type="catalytic activity">
    <reaction evidence="1">
        <text>tRNA(Leu) + L-leucine + ATP = L-leucyl-tRNA(Leu) + AMP + diphosphate</text>
        <dbReference type="Rhea" id="RHEA:11688"/>
        <dbReference type="Rhea" id="RHEA-COMP:9613"/>
        <dbReference type="Rhea" id="RHEA-COMP:9622"/>
        <dbReference type="ChEBI" id="CHEBI:30616"/>
        <dbReference type="ChEBI" id="CHEBI:33019"/>
        <dbReference type="ChEBI" id="CHEBI:57427"/>
        <dbReference type="ChEBI" id="CHEBI:78442"/>
        <dbReference type="ChEBI" id="CHEBI:78494"/>
        <dbReference type="ChEBI" id="CHEBI:456215"/>
        <dbReference type="EC" id="6.1.1.4"/>
    </reaction>
</comment>
<comment type="subcellular location">
    <subcellularLocation>
        <location evidence="1">Cytoplasm</location>
    </subcellularLocation>
</comment>
<comment type="similarity">
    <text evidence="1">Belongs to the class-I aminoacyl-tRNA synthetase family.</text>
</comment>
<feature type="chain" id="PRO_0000151966" description="Leucine--tRNA ligase">
    <location>
        <begin position="1"/>
        <end position="802"/>
    </location>
</feature>
<feature type="short sequence motif" description="'HIGH' region">
    <location>
        <begin position="40"/>
        <end position="51"/>
    </location>
</feature>
<feature type="short sequence motif" description="'KMSKS' region">
    <location>
        <begin position="576"/>
        <end position="580"/>
    </location>
</feature>
<feature type="binding site" evidence="1">
    <location>
        <position position="579"/>
    </location>
    <ligand>
        <name>ATP</name>
        <dbReference type="ChEBI" id="CHEBI:30616"/>
    </ligand>
</feature>
<keyword id="KW-0030">Aminoacyl-tRNA synthetase</keyword>
<keyword id="KW-0067">ATP-binding</keyword>
<keyword id="KW-0963">Cytoplasm</keyword>
<keyword id="KW-0436">Ligase</keyword>
<keyword id="KW-0547">Nucleotide-binding</keyword>
<keyword id="KW-0648">Protein biosynthesis</keyword>
<keyword id="KW-1185">Reference proteome</keyword>
<gene>
    <name evidence="1" type="primary">leuS</name>
    <name type="ordered locus">BC_4737</name>
</gene>
<organism>
    <name type="scientific">Bacillus cereus (strain ATCC 14579 / DSM 31 / CCUG 7414 / JCM 2152 / NBRC 15305 / NCIMB 9373 / NCTC 2599 / NRRL B-3711)</name>
    <dbReference type="NCBI Taxonomy" id="226900"/>
    <lineage>
        <taxon>Bacteria</taxon>
        <taxon>Bacillati</taxon>
        <taxon>Bacillota</taxon>
        <taxon>Bacilli</taxon>
        <taxon>Bacillales</taxon>
        <taxon>Bacillaceae</taxon>
        <taxon>Bacillus</taxon>
        <taxon>Bacillus cereus group</taxon>
    </lineage>
</organism>